<accession>A5UHU8</accession>
<keyword id="KW-0687">Ribonucleoprotein</keyword>
<keyword id="KW-0689">Ribosomal protein</keyword>
<keyword id="KW-0694">RNA-binding</keyword>
<keyword id="KW-0699">rRNA-binding</keyword>
<feature type="chain" id="PRO_1000086015" description="Small ribosomal subunit protein uS5">
    <location>
        <begin position="1"/>
        <end position="166"/>
    </location>
</feature>
<feature type="domain" description="S5 DRBM" evidence="1">
    <location>
        <begin position="11"/>
        <end position="74"/>
    </location>
</feature>
<proteinExistence type="inferred from homology"/>
<reference key="1">
    <citation type="journal article" date="2007" name="Genome Biol.">
        <title>Characterization and modeling of the Haemophilus influenzae core and supragenomes based on the complete genomic sequences of Rd and 12 clinical nontypeable strains.</title>
        <authorList>
            <person name="Hogg J.S."/>
            <person name="Hu F.Z."/>
            <person name="Janto B."/>
            <person name="Boissy R."/>
            <person name="Hayes J."/>
            <person name="Keefe R."/>
            <person name="Post J.C."/>
            <person name="Ehrlich G.D."/>
        </authorList>
    </citation>
    <scope>NUCLEOTIDE SEQUENCE [LARGE SCALE GENOMIC DNA]</scope>
    <source>
        <strain>PittGG</strain>
    </source>
</reference>
<evidence type="ECO:0000255" key="1">
    <source>
        <dbReference type="HAMAP-Rule" id="MF_01307"/>
    </source>
</evidence>
<evidence type="ECO:0000305" key="2"/>
<gene>
    <name evidence="1" type="primary">rpsE</name>
    <name type="ordered locus">CGSHiGG_07475</name>
</gene>
<name>RS5_HAEIG</name>
<sequence>MSNIEKQVGELQEKLIAVNRVSKTVKGGRIMSFTALTVVGDGNGRVGFGYGKAREVPAAIQKAMEKARRNMINVALNEGTLQHPVKGVHTGSRVFMQPASEGTGIIAGGAMRAVLEVAGVRNVLSKAYGSTNPINVVRATIDALANMKSPEMVAAKRGKTVDEILG</sequence>
<dbReference type="EMBL" id="CP000672">
    <property type="protein sequence ID" value="ABR00354.1"/>
    <property type="molecule type" value="Genomic_DNA"/>
</dbReference>
<dbReference type="SMR" id="A5UHU8"/>
<dbReference type="KEGG" id="hiq:CGSHiGG_07475"/>
<dbReference type="HOGENOM" id="CLU_065898_2_2_6"/>
<dbReference type="Proteomes" id="UP000001990">
    <property type="component" value="Chromosome"/>
</dbReference>
<dbReference type="GO" id="GO:0015935">
    <property type="term" value="C:small ribosomal subunit"/>
    <property type="evidence" value="ECO:0007669"/>
    <property type="project" value="InterPro"/>
</dbReference>
<dbReference type="GO" id="GO:0019843">
    <property type="term" value="F:rRNA binding"/>
    <property type="evidence" value="ECO:0007669"/>
    <property type="project" value="UniProtKB-UniRule"/>
</dbReference>
<dbReference type="GO" id="GO:0003735">
    <property type="term" value="F:structural constituent of ribosome"/>
    <property type="evidence" value="ECO:0007669"/>
    <property type="project" value="InterPro"/>
</dbReference>
<dbReference type="GO" id="GO:0006412">
    <property type="term" value="P:translation"/>
    <property type="evidence" value="ECO:0007669"/>
    <property type="project" value="UniProtKB-UniRule"/>
</dbReference>
<dbReference type="FunFam" id="3.30.160.20:FF:000001">
    <property type="entry name" value="30S ribosomal protein S5"/>
    <property type="match status" value="1"/>
</dbReference>
<dbReference type="FunFam" id="3.30.230.10:FF:000002">
    <property type="entry name" value="30S ribosomal protein S5"/>
    <property type="match status" value="1"/>
</dbReference>
<dbReference type="Gene3D" id="3.30.160.20">
    <property type="match status" value="1"/>
</dbReference>
<dbReference type="Gene3D" id="3.30.230.10">
    <property type="match status" value="1"/>
</dbReference>
<dbReference type="HAMAP" id="MF_01307_B">
    <property type="entry name" value="Ribosomal_uS5_B"/>
    <property type="match status" value="1"/>
</dbReference>
<dbReference type="InterPro" id="IPR020568">
    <property type="entry name" value="Ribosomal_Su5_D2-typ_SF"/>
</dbReference>
<dbReference type="InterPro" id="IPR000851">
    <property type="entry name" value="Ribosomal_uS5"/>
</dbReference>
<dbReference type="InterPro" id="IPR005712">
    <property type="entry name" value="Ribosomal_uS5_bac-type"/>
</dbReference>
<dbReference type="InterPro" id="IPR005324">
    <property type="entry name" value="Ribosomal_uS5_C"/>
</dbReference>
<dbReference type="InterPro" id="IPR013810">
    <property type="entry name" value="Ribosomal_uS5_N"/>
</dbReference>
<dbReference type="InterPro" id="IPR018192">
    <property type="entry name" value="Ribosomal_uS5_N_CS"/>
</dbReference>
<dbReference type="InterPro" id="IPR014721">
    <property type="entry name" value="Ribsml_uS5_D2-typ_fold_subgr"/>
</dbReference>
<dbReference type="NCBIfam" id="TIGR01021">
    <property type="entry name" value="rpsE_bact"/>
    <property type="match status" value="1"/>
</dbReference>
<dbReference type="PANTHER" id="PTHR48277">
    <property type="entry name" value="MITOCHONDRIAL RIBOSOMAL PROTEIN S5"/>
    <property type="match status" value="1"/>
</dbReference>
<dbReference type="PANTHER" id="PTHR48277:SF1">
    <property type="entry name" value="MITOCHONDRIAL RIBOSOMAL PROTEIN S5"/>
    <property type="match status" value="1"/>
</dbReference>
<dbReference type="Pfam" id="PF00333">
    <property type="entry name" value="Ribosomal_S5"/>
    <property type="match status" value="1"/>
</dbReference>
<dbReference type="Pfam" id="PF03719">
    <property type="entry name" value="Ribosomal_S5_C"/>
    <property type="match status" value="1"/>
</dbReference>
<dbReference type="SUPFAM" id="SSF54768">
    <property type="entry name" value="dsRNA-binding domain-like"/>
    <property type="match status" value="1"/>
</dbReference>
<dbReference type="SUPFAM" id="SSF54211">
    <property type="entry name" value="Ribosomal protein S5 domain 2-like"/>
    <property type="match status" value="1"/>
</dbReference>
<dbReference type="PROSITE" id="PS00585">
    <property type="entry name" value="RIBOSOMAL_S5"/>
    <property type="match status" value="1"/>
</dbReference>
<dbReference type="PROSITE" id="PS50881">
    <property type="entry name" value="S5_DSRBD"/>
    <property type="match status" value="1"/>
</dbReference>
<protein>
    <recommendedName>
        <fullName evidence="1">Small ribosomal subunit protein uS5</fullName>
    </recommendedName>
    <alternativeName>
        <fullName evidence="2">30S ribosomal protein S5</fullName>
    </alternativeName>
</protein>
<comment type="function">
    <text evidence="1">With S4 and S12 plays an important role in translational accuracy.</text>
</comment>
<comment type="function">
    <text evidence="1">Located at the back of the 30S subunit body where it stabilizes the conformation of the head with respect to the body.</text>
</comment>
<comment type="subunit">
    <text evidence="1">Part of the 30S ribosomal subunit. Contacts proteins S4 and S8.</text>
</comment>
<comment type="domain">
    <text>The N-terminal domain interacts with the head of the 30S subunit; the C-terminal domain interacts with the body and contacts protein S4. The interaction surface between S4 and S5 is involved in control of translational fidelity.</text>
</comment>
<comment type="similarity">
    <text evidence="1">Belongs to the universal ribosomal protein uS5 family.</text>
</comment>
<organism>
    <name type="scientific">Haemophilus influenzae (strain PittGG)</name>
    <dbReference type="NCBI Taxonomy" id="374931"/>
    <lineage>
        <taxon>Bacteria</taxon>
        <taxon>Pseudomonadati</taxon>
        <taxon>Pseudomonadota</taxon>
        <taxon>Gammaproteobacteria</taxon>
        <taxon>Pasteurellales</taxon>
        <taxon>Pasteurellaceae</taxon>
        <taxon>Haemophilus</taxon>
    </lineage>
</organism>